<feature type="chain" id="PRO_1000145163" description="Urease accessory protein UreG">
    <location>
        <begin position="1"/>
        <end position="203"/>
    </location>
</feature>
<feature type="binding site" evidence="1">
    <location>
        <begin position="14"/>
        <end position="21"/>
    </location>
    <ligand>
        <name>GTP</name>
        <dbReference type="ChEBI" id="CHEBI:37565"/>
    </ligand>
</feature>
<gene>
    <name evidence="1" type="primary">ureG</name>
    <name type="ordered locus">Atu2396</name>
    <name type="ORF">AGR_C_4348</name>
</gene>
<name>UREG_AGRFC</name>
<proteinExistence type="inferred from homology"/>
<sequence length="203" mass="21433">MKSGNGPLRVGIGGPVGSGKTALTEKLCKAMSGDYSVAVVTNDIYTKEDAEALVRMQALPSERIVGVETGGCPHTAIREDATINLQAIAGLNAQFPDLDVVFIESGGDNLAATFSPDLADITIYVISVCQGEEIPRKGGPGITRSDLLVINKKDLAPYVGADLTVMDSDATRMRNAMPFVFTDMKRGDGVDRIVGFLKEQGGL</sequence>
<protein>
    <recommendedName>
        <fullName evidence="1">Urease accessory protein UreG</fullName>
    </recommendedName>
</protein>
<keyword id="KW-0143">Chaperone</keyword>
<keyword id="KW-0963">Cytoplasm</keyword>
<keyword id="KW-0342">GTP-binding</keyword>
<keyword id="KW-0996">Nickel insertion</keyword>
<keyword id="KW-0547">Nucleotide-binding</keyword>
<keyword id="KW-1185">Reference proteome</keyword>
<organism>
    <name type="scientific">Agrobacterium fabrum (strain C58 / ATCC 33970)</name>
    <name type="common">Agrobacterium tumefaciens (strain C58)</name>
    <dbReference type="NCBI Taxonomy" id="176299"/>
    <lineage>
        <taxon>Bacteria</taxon>
        <taxon>Pseudomonadati</taxon>
        <taxon>Pseudomonadota</taxon>
        <taxon>Alphaproteobacteria</taxon>
        <taxon>Hyphomicrobiales</taxon>
        <taxon>Rhizobiaceae</taxon>
        <taxon>Rhizobium/Agrobacterium group</taxon>
        <taxon>Agrobacterium</taxon>
        <taxon>Agrobacterium tumefaciens complex</taxon>
    </lineage>
</organism>
<evidence type="ECO:0000255" key="1">
    <source>
        <dbReference type="HAMAP-Rule" id="MF_01389"/>
    </source>
</evidence>
<accession>Q7CX57</accession>
<comment type="function">
    <text evidence="1">Facilitates the functional incorporation of the urease nickel metallocenter. This process requires GTP hydrolysis, probably effectuated by UreG.</text>
</comment>
<comment type="subunit">
    <text evidence="1">Homodimer. UreD, UreF and UreG form a complex that acts as a GTP-hydrolysis-dependent molecular chaperone, activating the urease apoprotein by helping to assemble the nickel containing metallocenter of UreC. The UreE protein probably delivers the nickel.</text>
</comment>
<comment type="subcellular location">
    <subcellularLocation>
        <location evidence="1">Cytoplasm</location>
    </subcellularLocation>
</comment>
<comment type="similarity">
    <text evidence="1">Belongs to the SIMIBI class G3E GTPase family. UreG subfamily.</text>
</comment>
<reference key="1">
    <citation type="journal article" date="2001" name="Science">
        <title>The genome of the natural genetic engineer Agrobacterium tumefaciens C58.</title>
        <authorList>
            <person name="Wood D.W."/>
            <person name="Setubal J.C."/>
            <person name="Kaul R."/>
            <person name="Monks D.E."/>
            <person name="Kitajima J.P."/>
            <person name="Okura V.K."/>
            <person name="Zhou Y."/>
            <person name="Chen L."/>
            <person name="Wood G.E."/>
            <person name="Almeida N.F. Jr."/>
            <person name="Woo L."/>
            <person name="Chen Y."/>
            <person name="Paulsen I.T."/>
            <person name="Eisen J.A."/>
            <person name="Karp P.D."/>
            <person name="Bovee D. Sr."/>
            <person name="Chapman P."/>
            <person name="Clendenning J."/>
            <person name="Deatherage G."/>
            <person name="Gillet W."/>
            <person name="Grant C."/>
            <person name="Kutyavin T."/>
            <person name="Levy R."/>
            <person name="Li M.-J."/>
            <person name="McClelland E."/>
            <person name="Palmieri A."/>
            <person name="Raymond C."/>
            <person name="Rouse G."/>
            <person name="Saenphimmachak C."/>
            <person name="Wu Z."/>
            <person name="Romero P."/>
            <person name="Gordon D."/>
            <person name="Zhang S."/>
            <person name="Yoo H."/>
            <person name="Tao Y."/>
            <person name="Biddle P."/>
            <person name="Jung M."/>
            <person name="Krespan W."/>
            <person name="Perry M."/>
            <person name="Gordon-Kamm B."/>
            <person name="Liao L."/>
            <person name="Kim S."/>
            <person name="Hendrick C."/>
            <person name="Zhao Z.-Y."/>
            <person name="Dolan M."/>
            <person name="Chumley F."/>
            <person name="Tingey S.V."/>
            <person name="Tomb J.-F."/>
            <person name="Gordon M.P."/>
            <person name="Olson M.V."/>
            <person name="Nester E.W."/>
        </authorList>
    </citation>
    <scope>NUCLEOTIDE SEQUENCE [LARGE SCALE GENOMIC DNA]</scope>
    <source>
        <strain>C58 / ATCC 33970</strain>
    </source>
</reference>
<reference key="2">
    <citation type="journal article" date="2001" name="Science">
        <title>Genome sequence of the plant pathogen and biotechnology agent Agrobacterium tumefaciens C58.</title>
        <authorList>
            <person name="Goodner B."/>
            <person name="Hinkle G."/>
            <person name="Gattung S."/>
            <person name="Miller N."/>
            <person name="Blanchard M."/>
            <person name="Qurollo B."/>
            <person name="Goldman B.S."/>
            <person name="Cao Y."/>
            <person name="Askenazi M."/>
            <person name="Halling C."/>
            <person name="Mullin L."/>
            <person name="Houmiel K."/>
            <person name="Gordon J."/>
            <person name="Vaudin M."/>
            <person name="Iartchouk O."/>
            <person name="Epp A."/>
            <person name="Liu F."/>
            <person name="Wollam C."/>
            <person name="Allinger M."/>
            <person name="Doughty D."/>
            <person name="Scott C."/>
            <person name="Lappas C."/>
            <person name="Markelz B."/>
            <person name="Flanagan C."/>
            <person name="Crowell C."/>
            <person name="Gurson J."/>
            <person name="Lomo C."/>
            <person name="Sear C."/>
            <person name="Strub G."/>
            <person name="Cielo C."/>
            <person name="Slater S."/>
        </authorList>
    </citation>
    <scope>NUCLEOTIDE SEQUENCE [LARGE SCALE GENOMIC DNA]</scope>
    <source>
        <strain>C58 / ATCC 33970</strain>
    </source>
</reference>
<dbReference type="EMBL" id="AE007869">
    <property type="protein sequence ID" value="AAK88133.2"/>
    <property type="molecule type" value="Genomic_DNA"/>
</dbReference>
<dbReference type="RefSeq" id="NP_355348.2">
    <property type="nucleotide sequence ID" value="NC_003062.2"/>
</dbReference>
<dbReference type="RefSeq" id="WP_010972291.1">
    <property type="nucleotide sequence ID" value="NC_003062.2"/>
</dbReference>
<dbReference type="SMR" id="Q7CX57"/>
<dbReference type="STRING" id="176299.Atu2396"/>
<dbReference type="EnsemblBacteria" id="AAK88133">
    <property type="protein sequence ID" value="AAK88133"/>
    <property type="gene ID" value="Atu2396"/>
</dbReference>
<dbReference type="GeneID" id="1134434"/>
<dbReference type="KEGG" id="atu:Atu2396"/>
<dbReference type="PATRIC" id="fig|176299.10.peg.2405"/>
<dbReference type="eggNOG" id="COG0378">
    <property type="taxonomic scope" value="Bacteria"/>
</dbReference>
<dbReference type="HOGENOM" id="CLU_072144_1_0_5"/>
<dbReference type="OrthoDB" id="9802035at2"/>
<dbReference type="PhylomeDB" id="Q7CX57"/>
<dbReference type="BioCyc" id="AGRO:ATU2396-MONOMER"/>
<dbReference type="Proteomes" id="UP000000813">
    <property type="component" value="Chromosome circular"/>
</dbReference>
<dbReference type="GO" id="GO:0005737">
    <property type="term" value="C:cytoplasm"/>
    <property type="evidence" value="ECO:0007669"/>
    <property type="project" value="UniProtKB-SubCell"/>
</dbReference>
<dbReference type="GO" id="GO:0005525">
    <property type="term" value="F:GTP binding"/>
    <property type="evidence" value="ECO:0007669"/>
    <property type="project" value="UniProtKB-KW"/>
</dbReference>
<dbReference type="GO" id="GO:0003924">
    <property type="term" value="F:GTPase activity"/>
    <property type="evidence" value="ECO:0007669"/>
    <property type="project" value="InterPro"/>
</dbReference>
<dbReference type="GO" id="GO:0016151">
    <property type="term" value="F:nickel cation binding"/>
    <property type="evidence" value="ECO:0007669"/>
    <property type="project" value="UniProtKB-UniRule"/>
</dbReference>
<dbReference type="GO" id="GO:0043419">
    <property type="term" value="P:urea catabolic process"/>
    <property type="evidence" value="ECO:0007669"/>
    <property type="project" value="InterPro"/>
</dbReference>
<dbReference type="CDD" id="cd05540">
    <property type="entry name" value="UreG"/>
    <property type="match status" value="1"/>
</dbReference>
<dbReference type="FunFam" id="3.40.50.300:FF:000208">
    <property type="entry name" value="Urease accessory protein UreG"/>
    <property type="match status" value="1"/>
</dbReference>
<dbReference type="Gene3D" id="3.40.50.300">
    <property type="entry name" value="P-loop containing nucleotide triphosphate hydrolases"/>
    <property type="match status" value="1"/>
</dbReference>
<dbReference type="HAMAP" id="MF_01389">
    <property type="entry name" value="UreG"/>
    <property type="match status" value="1"/>
</dbReference>
<dbReference type="InterPro" id="IPR003495">
    <property type="entry name" value="CobW/HypB/UreG_nucleotide-bd"/>
</dbReference>
<dbReference type="InterPro" id="IPR027417">
    <property type="entry name" value="P-loop_NTPase"/>
</dbReference>
<dbReference type="InterPro" id="IPR004400">
    <property type="entry name" value="UreG"/>
</dbReference>
<dbReference type="NCBIfam" id="TIGR00101">
    <property type="entry name" value="ureG"/>
    <property type="match status" value="1"/>
</dbReference>
<dbReference type="PANTHER" id="PTHR31715">
    <property type="entry name" value="UREASE ACCESSORY PROTEIN G"/>
    <property type="match status" value="1"/>
</dbReference>
<dbReference type="PANTHER" id="PTHR31715:SF0">
    <property type="entry name" value="UREASE ACCESSORY PROTEIN G"/>
    <property type="match status" value="1"/>
</dbReference>
<dbReference type="Pfam" id="PF02492">
    <property type="entry name" value="cobW"/>
    <property type="match status" value="1"/>
</dbReference>
<dbReference type="PIRSF" id="PIRSF005624">
    <property type="entry name" value="Ni-bind_GTPase"/>
    <property type="match status" value="1"/>
</dbReference>
<dbReference type="SUPFAM" id="SSF52540">
    <property type="entry name" value="P-loop containing nucleoside triphosphate hydrolases"/>
    <property type="match status" value="1"/>
</dbReference>